<name>SMC_HALOH</name>
<dbReference type="EMBL" id="CP001098">
    <property type="protein sequence ID" value="ACL69482.1"/>
    <property type="molecule type" value="Genomic_DNA"/>
</dbReference>
<dbReference type="RefSeq" id="WP_012635670.1">
    <property type="nucleotide sequence ID" value="NC_011899.1"/>
</dbReference>
<dbReference type="SMR" id="B8CW13"/>
<dbReference type="STRING" id="373903.Hore_07250"/>
<dbReference type="KEGG" id="hor:Hore_07250"/>
<dbReference type="eggNOG" id="COG1196">
    <property type="taxonomic scope" value="Bacteria"/>
</dbReference>
<dbReference type="HOGENOM" id="CLU_001042_2_2_9"/>
<dbReference type="OrthoDB" id="9808768at2"/>
<dbReference type="Proteomes" id="UP000000719">
    <property type="component" value="Chromosome"/>
</dbReference>
<dbReference type="GO" id="GO:0005694">
    <property type="term" value="C:chromosome"/>
    <property type="evidence" value="ECO:0007669"/>
    <property type="project" value="InterPro"/>
</dbReference>
<dbReference type="GO" id="GO:0005737">
    <property type="term" value="C:cytoplasm"/>
    <property type="evidence" value="ECO:0007669"/>
    <property type="project" value="UniProtKB-SubCell"/>
</dbReference>
<dbReference type="GO" id="GO:0005524">
    <property type="term" value="F:ATP binding"/>
    <property type="evidence" value="ECO:0007669"/>
    <property type="project" value="UniProtKB-UniRule"/>
</dbReference>
<dbReference type="GO" id="GO:0016887">
    <property type="term" value="F:ATP hydrolysis activity"/>
    <property type="evidence" value="ECO:0007669"/>
    <property type="project" value="InterPro"/>
</dbReference>
<dbReference type="GO" id="GO:0003677">
    <property type="term" value="F:DNA binding"/>
    <property type="evidence" value="ECO:0007669"/>
    <property type="project" value="UniProtKB-UniRule"/>
</dbReference>
<dbReference type="GO" id="GO:0030261">
    <property type="term" value="P:chromosome condensation"/>
    <property type="evidence" value="ECO:0007669"/>
    <property type="project" value="InterPro"/>
</dbReference>
<dbReference type="GO" id="GO:0007059">
    <property type="term" value="P:chromosome segregation"/>
    <property type="evidence" value="ECO:0007669"/>
    <property type="project" value="UniProtKB-UniRule"/>
</dbReference>
<dbReference type="GO" id="GO:0006260">
    <property type="term" value="P:DNA replication"/>
    <property type="evidence" value="ECO:0007669"/>
    <property type="project" value="UniProtKB-UniRule"/>
</dbReference>
<dbReference type="GO" id="GO:0007062">
    <property type="term" value="P:sister chromatid cohesion"/>
    <property type="evidence" value="ECO:0007669"/>
    <property type="project" value="InterPro"/>
</dbReference>
<dbReference type="CDD" id="cd03278">
    <property type="entry name" value="ABC_SMC_barmotin"/>
    <property type="match status" value="2"/>
</dbReference>
<dbReference type="FunFam" id="3.40.50.300:FF:000901">
    <property type="entry name" value="Chromosome partition protein Smc"/>
    <property type="match status" value="1"/>
</dbReference>
<dbReference type="FunFam" id="3.40.50.300:FF:000984">
    <property type="entry name" value="Chromosome partition protein Smc"/>
    <property type="match status" value="1"/>
</dbReference>
<dbReference type="Gene3D" id="1.10.287.1490">
    <property type="match status" value="2"/>
</dbReference>
<dbReference type="Gene3D" id="1.20.1060.20">
    <property type="match status" value="1"/>
</dbReference>
<dbReference type="Gene3D" id="3.30.70.1620">
    <property type="match status" value="1"/>
</dbReference>
<dbReference type="Gene3D" id="3.40.50.300">
    <property type="entry name" value="P-loop containing nucleotide triphosphate hydrolases"/>
    <property type="match status" value="2"/>
</dbReference>
<dbReference type="HAMAP" id="MF_01894">
    <property type="entry name" value="Smc_prok"/>
    <property type="match status" value="1"/>
</dbReference>
<dbReference type="InterPro" id="IPR027417">
    <property type="entry name" value="P-loop_NTPase"/>
</dbReference>
<dbReference type="InterPro" id="IPR003395">
    <property type="entry name" value="RecF/RecN/SMC_N"/>
</dbReference>
<dbReference type="InterPro" id="IPR024704">
    <property type="entry name" value="SMC"/>
</dbReference>
<dbReference type="InterPro" id="IPR010935">
    <property type="entry name" value="SMC_hinge"/>
</dbReference>
<dbReference type="InterPro" id="IPR036277">
    <property type="entry name" value="SMC_hinge_sf"/>
</dbReference>
<dbReference type="InterPro" id="IPR011890">
    <property type="entry name" value="SMC_prok"/>
</dbReference>
<dbReference type="NCBIfam" id="TIGR02168">
    <property type="entry name" value="SMC_prok_B"/>
    <property type="match status" value="1"/>
</dbReference>
<dbReference type="PANTHER" id="PTHR43977">
    <property type="entry name" value="STRUCTURAL MAINTENANCE OF CHROMOSOMES PROTEIN 3"/>
    <property type="match status" value="1"/>
</dbReference>
<dbReference type="Pfam" id="PF06470">
    <property type="entry name" value="SMC_hinge"/>
    <property type="match status" value="1"/>
</dbReference>
<dbReference type="Pfam" id="PF02463">
    <property type="entry name" value="SMC_N"/>
    <property type="match status" value="1"/>
</dbReference>
<dbReference type="PIRSF" id="PIRSF005719">
    <property type="entry name" value="SMC"/>
    <property type="match status" value="1"/>
</dbReference>
<dbReference type="SMART" id="SM00968">
    <property type="entry name" value="SMC_hinge"/>
    <property type="match status" value="1"/>
</dbReference>
<dbReference type="SUPFAM" id="SSF52540">
    <property type="entry name" value="P-loop containing nucleoside triphosphate hydrolases"/>
    <property type="match status" value="2"/>
</dbReference>
<dbReference type="SUPFAM" id="SSF75553">
    <property type="entry name" value="Smc hinge domain"/>
    <property type="match status" value="1"/>
</dbReference>
<reference key="1">
    <citation type="journal article" date="2009" name="PLoS ONE">
        <title>Genome analysis of the anaerobic thermohalophilic bacterium Halothermothrix orenii.</title>
        <authorList>
            <person name="Mavromatis K."/>
            <person name="Ivanova N."/>
            <person name="Anderson I."/>
            <person name="Lykidis A."/>
            <person name="Hooper S.D."/>
            <person name="Sun H."/>
            <person name="Kunin V."/>
            <person name="Lapidus A."/>
            <person name="Hugenholtz P."/>
            <person name="Patel B."/>
            <person name="Kyrpides N.C."/>
        </authorList>
    </citation>
    <scope>NUCLEOTIDE SEQUENCE [LARGE SCALE GENOMIC DNA]</scope>
    <source>
        <strain>H 168 / OCM 544 / DSM 9562</strain>
    </source>
</reference>
<sequence>MFLKKLELKGFKSFAKPITINFESPITAIVGPNGSGKSNIVDAIRWVLGEQSAKTLRGSRMADVIFAGSKDYKALNKASVTLYLDNQDKILPLDVSTVKISRKVNMDGQSDYYLNGKICRLKDIENLLMDTGLGKDTYSIVGQGKIDSIINSRPEKLRELFEEAAGISKYKSRKMDAEKRLEKTNHDLQRIEDLIWELEKQVGPLEKAAQKAKKYRRLKEELKVLEVNLLLDKWDKNLDRLSSFEEDEQLLIHKLKSLTNNLTESQEKLESLQRTLKVKKDELSRLRDRYYRQKSKREEAENTLCILEERRQGLSREKENLNQEIKDLNLRREELTGRLDEIGSRLIELKEKIDNYNQNYESKKVLLDEIKENLDREKQDLFFLRNNILDGNVELKDISSQFEQLKERGRHLEEEIKRIKTTRDKISSEYDALNEREDKLRTYLKSVDNKIEEKRSVLTDLKEEELNLQARLEEAKKRFNRTRNKLNEKNSHLSILHEMEDSLEGYYRGVKNILKARSKLTGIIGVVADQIEVDKKYELAIETALGGRLQNIIVKDDKSARECVDYLKETKGGQATFLPVNMVNGRKVNFKNNQVKKVDGFLGIASSFVDCEDYLKPVIEYLLGRTIISTDLKSAIEIARLRKRGFKIVTLEGDVINSGGAITGGSKNSNKKMLLSRSRKIEDLKKEVLKLQNSLGEDSKNLNQLENKLKEVLNKKEVIKNDIRDLEIEKNNYHKDLIRLEQEKTKLSERLEEIDEEFVDCHDRLGKNDAAKQKLEDKLKALNDDFSLEKNEIENKEKRVEELEARHENINDEITRLKINLAQLNEKRESLRKEEEKSNKELIELAEKNEEFKERYNKILSEIKGINNKEGQLNELKVKLSGEIEKLKNDLNLTEKEVEEKQQRIDMLQREVSDLQTRLDKKKDEKHQIELKITRLENRNERIVEILENDYDVKPEDGFDDRIKITNYSRAGQKVKELKNAIKKLGTVNQGAIEEYNDLVDRLDYLQNQHDDLLKAKESITKVIQEIEETMSSLFHEAFLKVNGEFNNTFKELFNGGQASLKLTEPENLLETGVEIVAQPPGKQLKKLSLMSGGERALTAIALVFAFLKVNPSPFYILDEIDAPLDDANVTRFARYIKEYSRFAQFLIVTHRKNMMAEAETIYGVTMEESGVSKLISLKLSEQII</sequence>
<organism>
    <name type="scientific">Halothermothrix orenii (strain H 168 / OCM 544 / DSM 9562)</name>
    <dbReference type="NCBI Taxonomy" id="373903"/>
    <lineage>
        <taxon>Bacteria</taxon>
        <taxon>Bacillati</taxon>
        <taxon>Bacillota</taxon>
        <taxon>Clostridia</taxon>
        <taxon>Halanaerobiales</taxon>
        <taxon>Halothermotrichaceae</taxon>
        <taxon>Halothermothrix</taxon>
    </lineage>
</organism>
<proteinExistence type="inferred from homology"/>
<feature type="chain" id="PRO_0000409274" description="Chromosome partition protein Smc">
    <location>
        <begin position="1"/>
        <end position="1185"/>
    </location>
</feature>
<feature type="domain" description="SMC hinge">
    <location>
        <begin position="521"/>
        <end position="639"/>
    </location>
</feature>
<feature type="coiled-coil region" evidence="1">
    <location>
        <begin position="167"/>
        <end position="494"/>
    </location>
</feature>
<feature type="coiled-coil region" evidence="1">
    <location>
        <begin position="677"/>
        <end position="1031"/>
    </location>
</feature>
<feature type="binding site" evidence="1">
    <location>
        <begin position="32"/>
        <end position="39"/>
    </location>
    <ligand>
        <name>ATP</name>
        <dbReference type="ChEBI" id="CHEBI:30616"/>
    </ligand>
</feature>
<protein>
    <recommendedName>
        <fullName evidence="1">Chromosome partition protein Smc</fullName>
    </recommendedName>
</protein>
<comment type="function">
    <text evidence="1">Required for chromosome condensation and partitioning.</text>
</comment>
<comment type="subunit">
    <text evidence="1">Homodimer.</text>
</comment>
<comment type="subcellular location">
    <subcellularLocation>
        <location evidence="1">Cytoplasm</location>
    </subcellularLocation>
</comment>
<comment type="domain">
    <text evidence="1">Contains large globular domains required for ATP hydrolysis at each terminus and a third globular domain forming a flexible SMC hinge near the middle of the molecule. These domains are separated by coiled-coil structures.</text>
</comment>
<comment type="similarity">
    <text evidence="1">Belongs to the SMC family.</text>
</comment>
<accession>B8CW13</accession>
<keyword id="KW-0067">ATP-binding</keyword>
<keyword id="KW-0175">Coiled coil</keyword>
<keyword id="KW-0963">Cytoplasm</keyword>
<keyword id="KW-0238">DNA-binding</keyword>
<keyword id="KW-0547">Nucleotide-binding</keyword>
<keyword id="KW-1185">Reference proteome</keyword>
<evidence type="ECO:0000255" key="1">
    <source>
        <dbReference type="HAMAP-Rule" id="MF_01894"/>
    </source>
</evidence>
<gene>
    <name evidence="1" type="primary">smc</name>
    <name type="ordered locus">Hore_07250</name>
</gene>